<feature type="signal peptide" evidence="1">
    <location>
        <begin position="1"/>
        <end position="46"/>
    </location>
</feature>
<feature type="chain" id="PRO_0000046084" description="Iron-regulated surface determinant protein A">
    <location>
        <begin position="47"/>
        <end position="316"/>
    </location>
</feature>
<feature type="propeptide" id="PRO_0000046085" description="Removed by sortase A" evidence="6">
    <location>
        <begin position="317"/>
        <end position="350"/>
    </location>
</feature>
<feature type="domain" description="NEAT" evidence="5">
    <location>
        <begin position="62"/>
        <end position="184"/>
    </location>
</feature>
<feature type="region of interest" description="Disordered" evidence="7">
    <location>
        <begin position="188"/>
        <end position="314"/>
    </location>
</feature>
<feature type="short sequence motif" description="LPXTG sorting signal" evidence="6">
    <location>
        <begin position="313"/>
        <end position="317"/>
    </location>
</feature>
<feature type="compositionally biased region" description="Low complexity" evidence="7">
    <location>
        <begin position="203"/>
        <end position="214"/>
    </location>
</feature>
<feature type="compositionally biased region" description="Polar residues" evidence="7">
    <location>
        <begin position="252"/>
        <end position="268"/>
    </location>
</feature>
<feature type="compositionally biased region" description="Polar residues" evidence="7">
    <location>
        <begin position="278"/>
        <end position="296"/>
    </location>
</feature>
<feature type="compositionally biased region" description="Basic and acidic residues" evidence="7">
    <location>
        <begin position="299"/>
        <end position="314"/>
    </location>
</feature>
<feature type="binding site" evidence="1">
    <location>
        <position position="75"/>
    </location>
    <ligand>
        <name>heme</name>
        <dbReference type="ChEBI" id="CHEBI:30413"/>
    </ligand>
</feature>
<feature type="binding site" evidence="1">
    <location>
        <position position="82"/>
    </location>
    <ligand>
        <name>heme</name>
        <dbReference type="ChEBI" id="CHEBI:30413"/>
    </ligand>
</feature>
<feature type="binding site" description="axial binding residue" evidence="4">
    <location>
        <position position="166"/>
    </location>
    <ligand>
        <name>heme</name>
        <dbReference type="ChEBI" id="CHEBI:30413"/>
    </ligand>
    <ligandPart>
        <name>Fe</name>
        <dbReference type="ChEBI" id="CHEBI:18248"/>
    </ligandPart>
</feature>
<feature type="modified residue" description="Pentaglycyl murein peptidoglycan amidated threonine" evidence="6">
    <location>
        <position position="316"/>
    </location>
</feature>
<evidence type="ECO:0000250" key="1"/>
<evidence type="ECO:0000250" key="2">
    <source>
        <dbReference type="UniProtKB" id="A6QG31"/>
    </source>
</evidence>
<evidence type="ECO:0000250" key="3">
    <source>
        <dbReference type="UniProtKB" id="Q7A152"/>
    </source>
</evidence>
<evidence type="ECO:0000250" key="4">
    <source>
        <dbReference type="UniProtKB" id="Q7A655"/>
    </source>
</evidence>
<evidence type="ECO:0000255" key="5">
    <source>
        <dbReference type="PROSITE-ProRule" id="PRU00337"/>
    </source>
</evidence>
<evidence type="ECO:0000255" key="6">
    <source>
        <dbReference type="PROSITE-ProRule" id="PRU00477"/>
    </source>
</evidence>
<evidence type="ECO:0000256" key="7">
    <source>
        <dbReference type="SAM" id="MobiDB-lite"/>
    </source>
</evidence>
<evidence type="ECO:0000305" key="8"/>
<sequence>MTKHYLNSKYQSEQRSSAMKKITMGTASIILGSLVYIGADSQQVNAATEATNAPNNQSTQVSQATSQPINFQVQKDGSSEKSHMDDYMQHPGKVIKQNNKYYFQTVLNNASFWKEYKFYNANNQELATTVVNDNKKADTRTINVAVEPGYKSLTTKVHIVVPQINYNHRYTTHLEFEKAIPTLADAAKPNNVKPVQPKPAQPKTPTEQTKPVQPKVEKVKPTVTTTSKVEDNHSTKVVSTDTTKDQTKTQTAHTVKTAQTAQEQNKVQTPVKDVATAKSESNNQAVSDNKSQQTNKVTKHNETPKQASKAKELPKTGLTSVDNFISTVAFATLALLGSLSLLLFKRKESK</sequence>
<reference key="1">
    <citation type="journal article" date="2005" name="J. Bacteriol.">
        <title>Insights on evolution of virulence and resistance from the complete genome analysis of an early methicillin-resistant Staphylococcus aureus strain and a biofilm-producing methicillin-resistant Staphylococcus epidermidis strain.</title>
        <authorList>
            <person name="Gill S.R."/>
            <person name="Fouts D.E."/>
            <person name="Archer G.L."/>
            <person name="Mongodin E.F."/>
            <person name="DeBoy R.T."/>
            <person name="Ravel J."/>
            <person name="Paulsen I.T."/>
            <person name="Kolonay J.F."/>
            <person name="Brinkac L.M."/>
            <person name="Beanan M.J."/>
            <person name="Dodson R.J."/>
            <person name="Daugherty S.C."/>
            <person name="Madupu R."/>
            <person name="Angiuoli S.V."/>
            <person name="Durkin A.S."/>
            <person name="Haft D.H."/>
            <person name="Vamathevan J.J."/>
            <person name="Khouri H."/>
            <person name="Utterback T.R."/>
            <person name="Lee C."/>
            <person name="Dimitrov G."/>
            <person name="Jiang L."/>
            <person name="Qin H."/>
            <person name="Weidman J."/>
            <person name="Tran K."/>
            <person name="Kang K.H."/>
            <person name="Hance I.R."/>
            <person name="Nelson K.E."/>
            <person name="Fraser C.M."/>
        </authorList>
    </citation>
    <scope>NUCLEOTIDE SEQUENCE [LARGE SCALE GENOMIC DNA]</scope>
    <source>
        <strain>COL</strain>
    </source>
</reference>
<organism>
    <name type="scientific">Staphylococcus aureus (strain COL)</name>
    <dbReference type="NCBI Taxonomy" id="93062"/>
    <lineage>
        <taxon>Bacteria</taxon>
        <taxon>Bacillati</taxon>
        <taxon>Bacillota</taxon>
        <taxon>Bacilli</taxon>
        <taxon>Bacillales</taxon>
        <taxon>Staphylococcaceae</taxon>
        <taxon>Staphylococcus</taxon>
    </lineage>
</organism>
<keyword id="KW-0134">Cell wall</keyword>
<keyword id="KW-0349">Heme</keyword>
<keyword id="KW-0408">Iron</keyword>
<keyword id="KW-0479">Metal-binding</keyword>
<keyword id="KW-0572">Peptidoglycan-anchor</keyword>
<keyword id="KW-0964">Secreted</keyword>
<keyword id="KW-0732">Signal</keyword>
<protein>
    <recommendedName>
        <fullName>Iron-regulated surface determinant protein A</fullName>
    </recommendedName>
    <alternativeName>
        <fullName>Fur-regulated protein A</fullName>
    </alternativeName>
    <alternativeName>
        <fullName>Staphylococcal transferrin-binding protein A</fullName>
    </alternativeName>
</protein>
<gene>
    <name type="primary">isdA</name>
    <name type="synonym">frpA</name>
    <name type="synonym">stbA</name>
    <name type="ordered locus">SACOL1140</name>
</gene>
<comment type="function">
    <text evidence="2 3">Cell wall-anchored surface receptor that participates in the extraction of heme from oxidized methemoglobin/metHb to enable growth on hemoglobin as a sole iron source (By similarity). Receives heme from IsdB and transfers it to IsdC (By similarity). Also plays a role in the inhibition of host immune response. Protects S.aureus against the bactericidal protease activity of apolactoferrin. Decreases bacterial cellular hydrophobicity, which renders S.aureus resistant to bactericidal human skin fatty acids as well as to beta-defensins and cathelicidin. Also binds fibronectin and chains B-beta and gamma of fibrinogen, promoting clumping of S.aureus with fibrinogen. Involved in adherence of S.aureus to human desquamated nasal epithelial cells and is required for nasal colonization (By similarity).</text>
</comment>
<comment type="subunit">
    <text evidence="2 3">Monomer. Interacts with IsdC (By similarity). Interacts with IsdB (By similarity).</text>
</comment>
<comment type="subcellular location">
    <subcellularLocation>
        <location evidence="2">Secreted</location>
        <location evidence="2">Cell wall</location>
        <topology evidence="2">Peptidoglycan-anchor</topology>
    </subcellularLocation>
    <text evidence="2">Encodes an LPXTG motif-containing sorting signal that targets to the cell wall, which is catalyzed by sortase A.</text>
</comment>
<comment type="induction">
    <text evidence="1">Repressed by fur in the presence of iron.</text>
</comment>
<comment type="domain">
    <text evidence="1">The NEAT domain is responsible for binding Fe(3+) and Fe(2+) heme and fibrinogen. The NEAT domain is an inhibitor of apolactoferrin activity, while the C-domain confers resistance to bovine lactoferricin (By similarity).</text>
</comment>
<comment type="similarity">
    <text evidence="8">Belongs to the IsdA family.</text>
</comment>
<proteinExistence type="inferred from homology"/>
<name>ISDA_STAAC</name>
<accession>Q5HGV4</accession>
<dbReference type="EMBL" id="CP000046">
    <property type="protein sequence ID" value="AAW38019.1"/>
    <property type="molecule type" value="Genomic_DNA"/>
</dbReference>
<dbReference type="RefSeq" id="WP_000160839.1">
    <property type="nucleotide sequence ID" value="NC_002951.2"/>
</dbReference>
<dbReference type="SMR" id="Q5HGV4"/>
<dbReference type="KEGG" id="sac:SACOL1140"/>
<dbReference type="HOGENOM" id="CLU_068057_0_0_9"/>
<dbReference type="PRO" id="PR:Q5HGV4"/>
<dbReference type="Proteomes" id="UP000000530">
    <property type="component" value="Chromosome"/>
</dbReference>
<dbReference type="GO" id="GO:0005576">
    <property type="term" value="C:extracellular region"/>
    <property type="evidence" value="ECO:0007669"/>
    <property type="project" value="UniProtKB-KW"/>
</dbReference>
<dbReference type="GO" id="GO:0046872">
    <property type="term" value="F:metal ion binding"/>
    <property type="evidence" value="ECO:0007669"/>
    <property type="project" value="UniProtKB-KW"/>
</dbReference>
<dbReference type="CDD" id="cd06920">
    <property type="entry name" value="NEAT"/>
    <property type="match status" value="1"/>
</dbReference>
<dbReference type="Gene3D" id="2.60.40.1850">
    <property type="match status" value="1"/>
</dbReference>
<dbReference type="InterPro" id="IPR050436">
    <property type="entry name" value="IsdA"/>
</dbReference>
<dbReference type="InterPro" id="IPR019931">
    <property type="entry name" value="LPXTG_anchor"/>
</dbReference>
<dbReference type="InterPro" id="IPR006635">
    <property type="entry name" value="NEAT_dom"/>
</dbReference>
<dbReference type="InterPro" id="IPR037250">
    <property type="entry name" value="NEAT_dom_sf"/>
</dbReference>
<dbReference type="NCBIfam" id="TIGR01167">
    <property type="entry name" value="LPXTG_anchor"/>
    <property type="match status" value="1"/>
</dbReference>
<dbReference type="PANTHER" id="PTHR37824">
    <property type="entry name" value="IRON-REGULATED SURFACE DETERMINANT PROTEIN C"/>
    <property type="match status" value="1"/>
</dbReference>
<dbReference type="PANTHER" id="PTHR37824:SF1">
    <property type="entry name" value="IRON-REGULATED SURFACE DETERMINANT PROTEIN C"/>
    <property type="match status" value="1"/>
</dbReference>
<dbReference type="Pfam" id="PF00746">
    <property type="entry name" value="Gram_pos_anchor"/>
    <property type="match status" value="1"/>
</dbReference>
<dbReference type="Pfam" id="PF05031">
    <property type="entry name" value="NEAT"/>
    <property type="match status" value="1"/>
</dbReference>
<dbReference type="SMART" id="SM00725">
    <property type="entry name" value="NEAT"/>
    <property type="match status" value="1"/>
</dbReference>
<dbReference type="SUPFAM" id="SSF158911">
    <property type="entry name" value="NEAT domain-like"/>
    <property type="match status" value="1"/>
</dbReference>
<dbReference type="PROSITE" id="PS50847">
    <property type="entry name" value="GRAM_POS_ANCHORING"/>
    <property type="match status" value="1"/>
</dbReference>
<dbReference type="PROSITE" id="PS50978">
    <property type="entry name" value="NEAT"/>
    <property type="match status" value="1"/>
</dbReference>